<protein>
    <recommendedName>
        <fullName>Ragulator complex protein LAMTOR5</fullName>
    </recommendedName>
    <alternativeName>
        <fullName>Late endosomal/lysosomal adaptor and MAPK and MTOR activator 5</fullName>
    </alternativeName>
</protein>
<organism>
    <name type="scientific">Sus scrofa</name>
    <name type="common">Pig</name>
    <dbReference type="NCBI Taxonomy" id="9823"/>
    <lineage>
        <taxon>Eukaryota</taxon>
        <taxon>Metazoa</taxon>
        <taxon>Chordata</taxon>
        <taxon>Craniata</taxon>
        <taxon>Vertebrata</taxon>
        <taxon>Euteleostomi</taxon>
        <taxon>Mammalia</taxon>
        <taxon>Eutheria</taxon>
        <taxon>Laurasiatheria</taxon>
        <taxon>Artiodactyla</taxon>
        <taxon>Suina</taxon>
        <taxon>Suidae</taxon>
        <taxon>Sus</taxon>
    </lineage>
</organism>
<dbReference type="EMBL" id="AY698063">
    <property type="protein sequence ID" value="AAU05316.1"/>
    <property type="status" value="ALT_INIT"/>
    <property type="molecule type" value="mRNA"/>
</dbReference>
<dbReference type="RefSeq" id="XP_013852731.1">
    <property type="nucleotide sequence ID" value="XM_013997277.1"/>
</dbReference>
<dbReference type="SMR" id="Q66X52"/>
<dbReference type="FunCoup" id="Q66X52">
    <property type="interactions" value="958"/>
</dbReference>
<dbReference type="STRING" id="9823.ENSSSCP00000053110"/>
<dbReference type="PaxDb" id="9823-ENSSSCP00000007259"/>
<dbReference type="PeptideAtlas" id="Q66X52"/>
<dbReference type="Ensembl" id="ENSSSCT00000061729.3">
    <property type="protein sequence ID" value="ENSSSCP00000053110.3"/>
    <property type="gene ID" value="ENSSSCG00000040889.3"/>
</dbReference>
<dbReference type="Ensembl" id="ENSSSCT00060031869.1">
    <property type="protein sequence ID" value="ENSSSCP00060013652.1"/>
    <property type="gene ID" value="ENSSSCG00060023500.1"/>
</dbReference>
<dbReference type="Ensembl" id="ENSSSCT00105005380">
    <property type="protein sequence ID" value="ENSSSCP00105004025"/>
    <property type="gene ID" value="ENSSSCG00105002721"/>
</dbReference>
<dbReference type="GeneID" id="448965"/>
<dbReference type="KEGG" id="ssc:448965"/>
<dbReference type="CTD" id="10542"/>
<dbReference type="VGNC" id="VGNC:109634">
    <property type="gene designation" value="LAMTOR5"/>
</dbReference>
<dbReference type="eggNOG" id="ENOG502S5TK">
    <property type="taxonomic scope" value="Eukaryota"/>
</dbReference>
<dbReference type="GeneTree" id="ENSGT00390000006247"/>
<dbReference type="InParanoid" id="Q66X52"/>
<dbReference type="OMA" id="GIIYKQT"/>
<dbReference type="OrthoDB" id="76862at2759"/>
<dbReference type="Reactome" id="R-SSC-1632852">
    <property type="pathway name" value="Macroautophagy"/>
</dbReference>
<dbReference type="Reactome" id="R-SSC-165159">
    <property type="pathway name" value="MTOR signalling"/>
</dbReference>
<dbReference type="Reactome" id="R-SSC-166208">
    <property type="pathway name" value="mTORC1-mediated signalling"/>
</dbReference>
<dbReference type="Reactome" id="R-SSC-380972">
    <property type="pathway name" value="Energy dependent regulation of mTOR by LKB1-AMPK"/>
</dbReference>
<dbReference type="Reactome" id="R-SSC-5628897">
    <property type="pathway name" value="TP53 Regulates Metabolic Genes"/>
</dbReference>
<dbReference type="Reactome" id="R-SSC-8943724">
    <property type="pathway name" value="Regulation of PTEN gene transcription"/>
</dbReference>
<dbReference type="Reactome" id="R-SSC-9639288">
    <property type="pathway name" value="Amino acids regulate mTORC1"/>
</dbReference>
<dbReference type="Proteomes" id="UP000008227">
    <property type="component" value="Chromosome 4"/>
</dbReference>
<dbReference type="Proteomes" id="UP000314985">
    <property type="component" value="Unplaced"/>
</dbReference>
<dbReference type="Proteomes" id="UP000694570">
    <property type="component" value="Unplaced"/>
</dbReference>
<dbReference type="Proteomes" id="UP000694571">
    <property type="component" value="Unplaced"/>
</dbReference>
<dbReference type="Proteomes" id="UP000694720">
    <property type="component" value="Unplaced"/>
</dbReference>
<dbReference type="Proteomes" id="UP000694722">
    <property type="component" value="Unplaced"/>
</dbReference>
<dbReference type="Proteomes" id="UP000694723">
    <property type="component" value="Unplaced"/>
</dbReference>
<dbReference type="Proteomes" id="UP000694724">
    <property type="component" value="Unplaced"/>
</dbReference>
<dbReference type="Proteomes" id="UP000694725">
    <property type="component" value="Unplaced"/>
</dbReference>
<dbReference type="Proteomes" id="UP000694726">
    <property type="component" value="Unplaced"/>
</dbReference>
<dbReference type="Proteomes" id="UP000694727">
    <property type="component" value="Unplaced"/>
</dbReference>
<dbReference type="Proteomes" id="UP000694728">
    <property type="component" value="Unplaced"/>
</dbReference>
<dbReference type="GO" id="GO:0005829">
    <property type="term" value="C:cytosol"/>
    <property type="evidence" value="ECO:0007669"/>
    <property type="project" value="UniProtKB-SubCell"/>
</dbReference>
<dbReference type="GO" id="GO:1990877">
    <property type="term" value="C:FNIP-folliculin RagC/D GAP"/>
    <property type="evidence" value="ECO:0007669"/>
    <property type="project" value="Ensembl"/>
</dbReference>
<dbReference type="GO" id="GO:0005765">
    <property type="term" value="C:lysosomal membrane"/>
    <property type="evidence" value="ECO:0000250"/>
    <property type="project" value="UniProtKB"/>
</dbReference>
<dbReference type="GO" id="GO:0005764">
    <property type="term" value="C:lysosome"/>
    <property type="evidence" value="ECO:0000250"/>
    <property type="project" value="UniProtKB"/>
</dbReference>
<dbReference type="GO" id="GO:0071986">
    <property type="term" value="C:Ragulator complex"/>
    <property type="evidence" value="ECO:0000250"/>
    <property type="project" value="UniProtKB"/>
</dbReference>
<dbReference type="GO" id="GO:0005085">
    <property type="term" value="F:guanyl-nucleotide exchange factor activity"/>
    <property type="evidence" value="ECO:0007669"/>
    <property type="project" value="Ensembl"/>
</dbReference>
<dbReference type="GO" id="GO:0060090">
    <property type="term" value="F:molecular adaptor activity"/>
    <property type="evidence" value="ECO:0007669"/>
    <property type="project" value="Ensembl"/>
</dbReference>
<dbReference type="GO" id="GO:0071230">
    <property type="term" value="P:cellular response to amino acid stimulus"/>
    <property type="evidence" value="ECO:0000250"/>
    <property type="project" value="UniProtKB"/>
</dbReference>
<dbReference type="GO" id="GO:0043066">
    <property type="term" value="P:negative regulation of apoptotic process"/>
    <property type="evidence" value="ECO:0007669"/>
    <property type="project" value="Ensembl"/>
</dbReference>
<dbReference type="GO" id="GO:0043123">
    <property type="term" value="P:positive regulation of canonical NF-kappaB signal transduction"/>
    <property type="evidence" value="ECO:0007669"/>
    <property type="project" value="Ensembl"/>
</dbReference>
<dbReference type="GO" id="GO:0032757">
    <property type="term" value="P:positive regulation of interleukin-8 production"/>
    <property type="evidence" value="ECO:0007669"/>
    <property type="project" value="Ensembl"/>
</dbReference>
<dbReference type="GO" id="GO:1900182">
    <property type="term" value="P:positive regulation of protein localization to nucleus"/>
    <property type="evidence" value="ECO:0007669"/>
    <property type="project" value="Ensembl"/>
</dbReference>
<dbReference type="GO" id="GO:0032008">
    <property type="term" value="P:positive regulation of TOR signaling"/>
    <property type="evidence" value="ECO:0000250"/>
    <property type="project" value="UniProtKB"/>
</dbReference>
<dbReference type="GO" id="GO:1904263">
    <property type="term" value="P:positive regulation of TORC1 signaling"/>
    <property type="evidence" value="ECO:0000250"/>
    <property type="project" value="UniProtKB"/>
</dbReference>
<dbReference type="GO" id="GO:0061462">
    <property type="term" value="P:protein localization to lysosome"/>
    <property type="evidence" value="ECO:0000250"/>
    <property type="project" value="UniProtKB"/>
</dbReference>
<dbReference type="GO" id="GO:0008361">
    <property type="term" value="P:regulation of cell size"/>
    <property type="evidence" value="ECO:0000250"/>
    <property type="project" value="UniProtKB"/>
</dbReference>
<dbReference type="FunFam" id="3.30.450.30:FF:000005">
    <property type="entry name" value="Ragulator complex protein LAMTOR5 homolog"/>
    <property type="match status" value="1"/>
</dbReference>
<dbReference type="Gene3D" id="3.30.450.30">
    <property type="entry name" value="Dynein light chain 2a, cytoplasmic"/>
    <property type="match status" value="1"/>
</dbReference>
<dbReference type="InterPro" id="IPR024135">
    <property type="entry name" value="LAMTOR5"/>
</dbReference>
<dbReference type="PANTHER" id="PTHR13342">
    <property type="entry name" value="RAGULATOR COMPLEX PROTEIN LAMTOR5"/>
    <property type="match status" value="1"/>
</dbReference>
<dbReference type="PANTHER" id="PTHR13342:SF2">
    <property type="entry name" value="RAGULATOR COMPLEX PROTEIN LAMTOR5"/>
    <property type="match status" value="1"/>
</dbReference>
<dbReference type="Pfam" id="PF16672">
    <property type="entry name" value="LAMTOR5"/>
    <property type="match status" value="1"/>
</dbReference>
<dbReference type="PRINTS" id="PR02092">
    <property type="entry name" value="HEPBVIRUSXIP"/>
</dbReference>
<dbReference type="SUPFAM" id="SSF103196">
    <property type="entry name" value="Roadblock/LC7 domain"/>
    <property type="match status" value="1"/>
</dbReference>
<feature type="chain" id="PRO_0000331595" description="Ragulator complex protein LAMTOR5">
    <location>
        <begin position="1"/>
        <end position="91"/>
    </location>
</feature>
<feature type="modified residue" description="N-acetylmethionine" evidence="1">
    <location>
        <position position="1"/>
    </location>
</feature>
<gene>
    <name type="primary">LAMTOR5</name>
</gene>
<comment type="function">
    <text evidence="1">As part of the Ragulator complex it is involved in amino acid sensing and activation of mTORC1, a signaling complex promoting cell growth in response to growth factors, energy levels, and amino acids. Activated by amino acids through a mechanism involving the lysosomal V-ATPase, the Ragulator plays a dual role for the small GTPases Rag (RagA/RRAGA, RagB/RRAGB, RagC/RRAGC and/or RagD/RRAGD): it (1) acts as a guanine nucleotide exchange factor (GEF), activating the small GTPases Rag and (2) mediates recruitment of Rag GTPases to the lysosome membrane. Activated Ragulator and Rag GTPases function as a scaffold recruiting mTORC1 to lysosomes where it is in turn activated. When complexed to BIRC5, interferes with apoptosome assembly, preventing recruitment of pro-caspase-9 to oligomerized APAF1, thereby selectively suppressing apoptosis initiated via the mitochondrial/cytochrome c pathway.</text>
</comment>
<comment type="subunit">
    <text evidence="1">Homodimer. Part of the Ragulator complex composed of LAMTOR1, LAMTOR2, LAMTOR3, LAMTOR4 and LAMTOR5. LAMTOR4 and LAMTOR5 form a heterodimer that interacts, through LAMTOR1, with a LAMTOR2, LAMTOR3 heterodimer. The Ragulator complex interacts with both the mTORC1 complex and heterodimers constituted of the Rag GTPases RagA/RRAGA, RagB/RRAGB, RagC/RRAGC and RagD/RRAGD; regulated by amino acid availability. The Ragulator complex interacts with SLC38A9; the probable amino acid sensor. Component of the lysosomal folliculin complex (LFC), composed of FLCN, FNIP1 (or FNIP2), RagA/RRAGA or RagB/RRAGB GDP-bound, RagC/RRAGC or RagD/RRAGD GTP-bound, and Ragulator. Interacts with phosphorylated BIRC5; the resulting complex binds pro-caspase-9, as well as active caspase-9, but much less efficiently. Interacts with SUPV3L1.</text>
</comment>
<comment type="subcellular location">
    <subcellularLocation>
        <location evidence="1">Lysosome</location>
    </subcellularLocation>
    <subcellularLocation>
        <location evidence="1">Cytoplasm</location>
        <location evidence="1">Cytosol</location>
    </subcellularLocation>
</comment>
<comment type="similarity">
    <text evidence="2">Belongs to the LAMTOR5 family.</text>
</comment>
<comment type="sequence caution" evidence="2">
    <conflict type="erroneous initiation">
        <sequence resource="EMBL-CDS" id="AAU05316"/>
    </conflict>
</comment>
<sequence>MEATLEQHLEDTMKNPSIVGVLCTDSQGLNLGCRGTLSDEHAGVISVLAQQAAKLTSDPTDIPVVCLESDNGNIMIQKHDGITVAVHKMAS</sequence>
<evidence type="ECO:0000250" key="1">
    <source>
        <dbReference type="UniProtKB" id="O43504"/>
    </source>
</evidence>
<evidence type="ECO:0000305" key="2"/>
<reference key="1">
    <citation type="submission" date="2004-07" db="EMBL/GenBank/DDBJ databases">
        <title>Differentially expressed genes (DEGs) in porcine MII oocytes.</title>
        <authorList>
            <person name="Cui X.S."/>
            <person name="Jin Y.X."/>
            <person name="Hwang K.C."/>
            <person name="Kim N.H."/>
        </authorList>
    </citation>
    <scope>NUCLEOTIDE SEQUENCE [MRNA]</scope>
</reference>
<proteinExistence type="inferred from homology"/>
<keyword id="KW-0007">Acetylation</keyword>
<keyword id="KW-0963">Cytoplasm</keyword>
<keyword id="KW-0458">Lysosome</keyword>
<keyword id="KW-1185">Reference proteome</keyword>
<accession>Q66X52</accession>
<name>LTOR5_PIG</name>